<name>PROA_DESOH</name>
<protein>
    <recommendedName>
        <fullName evidence="1">Gamma-glutamyl phosphate reductase</fullName>
        <shortName evidence="1">GPR</shortName>
        <ecNumber evidence="1">1.2.1.41</ecNumber>
    </recommendedName>
    <alternativeName>
        <fullName evidence="1">Glutamate-5-semialdehyde dehydrogenase</fullName>
    </alternativeName>
    <alternativeName>
        <fullName evidence="1">Glutamyl-gamma-semialdehyde dehydrogenase</fullName>
        <shortName evidence="1">GSA dehydrogenase</shortName>
    </alternativeName>
</protein>
<evidence type="ECO:0000255" key="1">
    <source>
        <dbReference type="HAMAP-Rule" id="MF_00412"/>
    </source>
</evidence>
<proteinExistence type="inferred from homology"/>
<reference key="1">
    <citation type="submission" date="2007-10" db="EMBL/GenBank/DDBJ databases">
        <title>Complete sequence of Desulfococcus oleovorans Hxd3.</title>
        <authorList>
            <consortium name="US DOE Joint Genome Institute"/>
            <person name="Copeland A."/>
            <person name="Lucas S."/>
            <person name="Lapidus A."/>
            <person name="Barry K."/>
            <person name="Glavina del Rio T."/>
            <person name="Dalin E."/>
            <person name="Tice H."/>
            <person name="Pitluck S."/>
            <person name="Kiss H."/>
            <person name="Brettin T."/>
            <person name="Bruce D."/>
            <person name="Detter J.C."/>
            <person name="Han C."/>
            <person name="Schmutz J."/>
            <person name="Larimer F."/>
            <person name="Land M."/>
            <person name="Hauser L."/>
            <person name="Kyrpides N."/>
            <person name="Kim E."/>
            <person name="Wawrik B."/>
            <person name="Richardson P."/>
        </authorList>
    </citation>
    <scope>NUCLEOTIDE SEQUENCE [LARGE SCALE GENOMIC DNA]</scope>
    <source>
        <strain>DSM 6200 / JCM 39069 / Hxd3</strain>
    </source>
</reference>
<keyword id="KW-0028">Amino-acid biosynthesis</keyword>
<keyword id="KW-0963">Cytoplasm</keyword>
<keyword id="KW-0521">NADP</keyword>
<keyword id="KW-0560">Oxidoreductase</keyword>
<keyword id="KW-0641">Proline biosynthesis</keyword>
<keyword id="KW-1185">Reference proteome</keyword>
<gene>
    <name evidence="1" type="primary">proA</name>
    <name type="ordered locus">Dole_0090</name>
</gene>
<dbReference type="EC" id="1.2.1.41" evidence="1"/>
<dbReference type="EMBL" id="CP000859">
    <property type="protein sequence ID" value="ABW65900.1"/>
    <property type="molecule type" value="Genomic_DNA"/>
</dbReference>
<dbReference type="RefSeq" id="WP_012173519.1">
    <property type="nucleotide sequence ID" value="NC_009943.1"/>
</dbReference>
<dbReference type="SMR" id="A8ZRY3"/>
<dbReference type="STRING" id="96561.Dole_0090"/>
<dbReference type="KEGG" id="dol:Dole_0090"/>
<dbReference type="eggNOG" id="COG0014">
    <property type="taxonomic scope" value="Bacteria"/>
</dbReference>
<dbReference type="HOGENOM" id="CLU_030231_0_0_7"/>
<dbReference type="OrthoDB" id="9809970at2"/>
<dbReference type="UniPathway" id="UPA00098">
    <property type="reaction ID" value="UER00360"/>
</dbReference>
<dbReference type="Proteomes" id="UP000008561">
    <property type="component" value="Chromosome"/>
</dbReference>
<dbReference type="GO" id="GO:0005737">
    <property type="term" value="C:cytoplasm"/>
    <property type="evidence" value="ECO:0007669"/>
    <property type="project" value="UniProtKB-SubCell"/>
</dbReference>
<dbReference type="GO" id="GO:0004350">
    <property type="term" value="F:glutamate-5-semialdehyde dehydrogenase activity"/>
    <property type="evidence" value="ECO:0007669"/>
    <property type="project" value="UniProtKB-UniRule"/>
</dbReference>
<dbReference type="GO" id="GO:0050661">
    <property type="term" value="F:NADP binding"/>
    <property type="evidence" value="ECO:0007669"/>
    <property type="project" value="InterPro"/>
</dbReference>
<dbReference type="GO" id="GO:0055129">
    <property type="term" value="P:L-proline biosynthetic process"/>
    <property type="evidence" value="ECO:0007669"/>
    <property type="project" value="UniProtKB-UniRule"/>
</dbReference>
<dbReference type="CDD" id="cd07079">
    <property type="entry name" value="ALDH_F18-19_ProA-GPR"/>
    <property type="match status" value="1"/>
</dbReference>
<dbReference type="FunFam" id="3.40.309.10:FF:000006">
    <property type="entry name" value="Gamma-glutamyl phosphate reductase"/>
    <property type="match status" value="1"/>
</dbReference>
<dbReference type="Gene3D" id="3.40.605.10">
    <property type="entry name" value="Aldehyde Dehydrogenase, Chain A, domain 1"/>
    <property type="match status" value="1"/>
</dbReference>
<dbReference type="Gene3D" id="3.40.309.10">
    <property type="entry name" value="Aldehyde Dehydrogenase, Chain A, domain 2"/>
    <property type="match status" value="1"/>
</dbReference>
<dbReference type="HAMAP" id="MF_00412">
    <property type="entry name" value="ProA"/>
    <property type="match status" value="1"/>
</dbReference>
<dbReference type="InterPro" id="IPR016161">
    <property type="entry name" value="Ald_DH/histidinol_DH"/>
</dbReference>
<dbReference type="InterPro" id="IPR016163">
    <property type="entry name" value="Ald_DH_C"/>
</dbReference>
<dbReference type="InterPro" id="IPR016162">
    <property type="entry name" value="Ald_DH_N"/>
</dbReference>
<dbReference type="InterPro" id="IPR015590">
    <property type="entry name" value="Aldehyde_DH_dom"/>
</dbReference>
<dbReference type="InterPro" id="IPR020593">
    <property type="entry name" value="G-glutamylP_reductase_CS"/>
</dbReference>
<dbReference type="InterPro" id="IPR012134">
    <property type="entry name" value="Glu-5-SA_DH"/>
</dbReference>
<dbReference type="InterPro" id="IPR000965">
    <property type="entry name" value="GPR_dom"/>
</dbReference>
<dbReference type="NCBIfam" id="NF001221">
    <property type="entry name" value="PRK00197.1"/>
    <property type="match status" value="1"/>
</dbReference>
<dbReference type="NCBIfam" id="TIGR00407">
    <property type="entry name" value="proA"/>
    <property type="match status" value="1"/>
</dbReference>
<dbReference type="PANTHER" id="PTHR11063:SF8">
    <property type="entry name" value="DELTA-1-PYRROLINE-5-CARBOXYLATE SYNTHASE"/>
    <property type="match status" value="1"/>
</dbReference>
<dbReference type="PANTHER" id="PTHR11063">
    <property type="entry name" value="GLUTAMATE SEMIALDEHYDE DEHYDROGENASE"/>
    <property type="match status" value="1"/>
</dbReference>
<dbReference type="Pfam" id="PF00171">
    <property type="entry name" value="Aldedh"/>
    <property type="match status" value="1"/>
</dbReference>
<dbReference type="PIRSF" id="PIRSF000151">
    <property type="entry name" value="GPR"/>
    <property type="match status" value="1"/>
</dbReference>
<dbReference type="SUPFAM" id="SSF53720">
    <property type="entry name" value="ALDH-like"/>
    <property type="match status" value="1"/>
</dbReference>
<dbReference type="PROSITE" id="PS01223">
    <property type="entry name" value="PROA"/>
    <property type="match status" value="1"/>
</dbReference>
<sequence length="418" mass="44431">MTIEATIVDIAKAAKKAALAMATCPTDKKNQALLALADRLHKDAALIQAENKKDLEAAKATGLSSAMIDRLTVSDAVIASMADGLREVAALPDPVGAKSATWRRPNGLEVARMRIPLGVIGIIYESRPNVTVDAAGLCLKAGNTVILRGGSEALHSNRALAATISASLAESGLPETAVQVVPVADREAVTHLLAQEEYIDLIIPRGGEGLIRFVVQHSSIPVLKHYKGVCHVYVDQDADMEMARAICFNAKVQRPGVCNAMETLLVHRDAAQRFLPDMARQFADAGVALRGCAATRALLPGIETAEEADWYAEYLDLILAVKVVDSMDAAISHIATYGSSHTEVIVTNSYDRAMRFLAAVDSSVVLVNASTRFNDGGQLGLGAEIGISTSKLHAFGPMGLEELTTTKFIVLGNGQIRE</sequence>
<organism>
    <name type="scientific">Desulfosudis oleivorans (strain DSM 6200 / JCM 39069 / Hxd3)</name>
    <name type="common">Desulfococcus oleovorans</name>
    <dbReference type="NCBI Taxonomy" id="96561"/>
    <lineage>
        <taxon>Bacteria</taxon>
        <taxon>Pseudomonadati</taxon>
        <taxon>Thermodesulfobacteriota</taxon>
        <taxon>Desulfobacteria</taxon>
        <taxon>Desulfobacterales</taxon>
        <taxon>Desulfosudaceae</taxon>
        <taxon>Desulfosudis</taxon>
    </lineage>
</organism>
<comment type="function">
    <text evidence="1">Catalyzes the NADPH-dependent reduction of L-glutamate 5-phosphate into L-glutamate 5-semialdehyde and phosphate. The product spontaneously undergoes cyclization to form 1-pyrroline-5-carboxylate.</text>
</comment>
<comment type="catalytic activity">
    <reaction evidence="1">
        <text>L-glutamate 5-semialdehyde + phosphate + NADP(+) = L-glutamyl 5-phosphate + NADPH + H(+)</text>
        <dbReference type="Rhea" id="RHEA:19541"/>
        <dbReference type="ChEBI" id="CHEBI:15378"/>
        <dbReference type="ChEBI" id="CHEBI:43474"/>
        <dbReference type="ChEBI" id="CHEBI:57783"/>
        <dbReference type="ChEBI" id="CHEBI:58066"/>
        <dbReference type="ChEBI" id="CHEBI:58274"/>
        <dbReference type="ChEBI" id="CHEBI:58349"/>
        <dbReference type="EC" id="1.2.1.41"/>
    </reaction>
</comment>
<comment type="pathway">
    <text evidence="1">Amino-acid biosynthesis; L-proline biosynthesis; L-glutamate 5-semialdehyde from L-glutamate: step 2/2.</text>
</comment>
<comment type="subcellular location">
    <subcellularLocation>
        <location evidence="1">Cytoplasm</location>
    </subcellularLocation>
</comment>
<comment type="similarity">
    <text evidence="1">Belongs to the gamma-glutamyl phosphate reductase family.</text>
</comment>
<feature type="chain" id="PRO_1000193596" description="Gamma-glutamyl phosphate reductase">
    <location>
        <begin position="1"/>
        <end position="418"/>
    </location>
</feature>
<accession>A8ZRY3</accession>